<proteinExistence type="inferred from homology"/>
<reference key="1">
    <citation type="journal article" date="2004" name="Nature">
        <title>Genome evolution in yeasts.</title>
        <authorList>
            <person name="Dujon B."/>
            <person name="Sherman D."/>
            <person name="Fischer G."/>
            <person name="Durrens P."/>
            <person name="Casaregola S."/>
            <person name="Lafontaine I."/>
            <person name="de Montigny J."/>
            <person name="Marck C."/>
            <person name="Neuveglise C."/>
            <person name="Talla E."/>
            <person name="Goffard N."/>
            <person name="Frangeul L."/>
            <person name="Aigle M."/>
            <person name="Anthouard V."/>
            <person name="Babour A."/>
            <person name="Barbe V."/>
            <person name="Barnay S."/>
            <person name="Blanchin S."/>
            <person name="Beckerich J.-M."/>
            <person name="Beyne E."/>
            <person name="Bleykasten C."/>
            <person name="Boisrame A."/>
            <person name="Boyer J."/>
            <person name="Cattolico L."/>
            <person name="Confanioleri F."/>
            <person name="de Daruvar A."/>
            <person name="Despons L."/>
            <person name="Fabre E."/>
            <person name="Fairhead C."/>
            <person name="Ferry-Dumazet H."/>
            <person name="Groppi A."/>
            <person name="Hantraye F."/>
            <person name="Hennequin C."/>
            <person name="Jauniaux N."/>
            <person name="Joyet P."/>
            <person name="Kachouri R."/>
            <person name="Kerrest A."/>
            <person name="Koszul R."/>
            <person name="Lemaire M."/>
            <person name="Lesur I."/>
            <person name="Ma L."/>
            <person name="Muller H."/>
            <person name="Nicaud J.-M."/>
            <person name="Nikolski M."/>
            <person name="Oztas S."/>
            <person name="Ozier-Kalogeropoulos O."/>
            <person name="Pellenz S."/>
            <person name="Potier S."/>
            <person name="Richard G.-F."/>
            <person name="Straub M.-L."/>
            <person name="Suleau A."/>
            <person name="Swennen D."/>
            <person name="Tekaia F."/>
            <person name="Wesolowski-Louvel M."/>
            <person name="Westhof E."/>
            <person name="Wirth B."/>
            <person name="Zeniou-Meyer M."/>
            <person name="Zivanovic Y."/>
            <person name="Bolotin-Fukuhara M."/>
            <person name="Thierry A."/>
            <person name="Bouchier C."/>
            <person name="Caudron B."/>
            <person name="Scarpelli C."/>
            <person name="Gaillardin C."/>
            <person name="Weissenbach J."/>
            <person name="Wincker P."/>
            <person name="Souciet J.-L."/>
        </authorList>
    </citation>
    <scope>NUCLEOTIDE SEQUENCE [LARGE SCALE GENOMIC DNA]</scope>
    <source>
        <strain>ATCC 8585 / CBS 2359 / DSM 70799 / NBRC 1267 / NRRL Y-1140 / WM37</strain>
    </source>
</reference>
<gene>
    <name type="primary">RBD2</name>
    <name type="ordered locus">KLLA0D12804g</name>
</gene>
<protein>
    <recommendedName>
        <fullName evidence="5">Rhomboid-type serine protease 2</fullName>
        <ecNumber evidence="2">3.4.21.105</ecNumber>
    </recommendedName>
    <alternativeName>
        <fullName evidence="5">Rhomboid protein 2</fullName>
    </alternativeName>
</protein>
<comment type="function">
    <text evidence="2">Probable rhomboid-type serine protease that catalyzes intramembrane proteolysis.</text>
</comment>
<comment type="catalytic activity">
    <reaction evidence="2">
        <text>Cleaves type-1 transmembrane domains using a catalytic dyad composed of serine and histidine that are contributed by different transmembrane domains.</text>
        <dbReference type="EC" id="3.4.21.105"/>
    </reaction>
</comment>
<comment type="subcellular location">
    <subcellularLocation>
        <location evidence="1">Golgi apparatus membrane</location>
        <topology evidence="1">Multi-pass membrane protein</topology>
    </subcellularLocation>
    <subcellularLocation>
        <location evidence="1">Golgi apparatus</location>
        <location evidence="1">cis-Golgi network membrane</location>
        <topology evidence="1">Multi-pass membrane protein</topology>
    </subcellularLocation>
</comment>
<comment type="similarity">
    <text evidence="5">Belongs to the peptidase S54 family.</text>
</comment>
<feature type="chain" id="PRO_0000206188" description="Rhomboid-type serine protease 2">
    <location>
        <begin position="1"/>
        <end position="271"/>
    </location>
</feature>
<feature type="transmembrane region" description="Helical" evidence="3">
    <location>
        <begin position="16"/>
        <end position="36"/>
    </location>
</feature>
<feature type="transmembrane region" description="Helical" evidence="3">
    <location>
        <begin position="64"/>
        <end position="84"/>
    </location>
</feature>
<feature type="transmembrane region" description="Helical" evidence="3">
    <location>
        <begin position="89"/>
        <end position="111"/>
    </location>
</feature>
<feature type="transmembrane region" description="Helical" evidence="3">
    <location>
        <begin position="115"/>
        <end position="137"/>
    </location>
</feature>
<feature type="transmembrane region" description="Helical" evidence="3">
    <location>
        <begin position="152"/>
        <end position="172"/>
    </location>
</feature>
<feature type="transmembrane region" description="Helical" evidence="3">
    <location>
        <begin position="176"/>
        <end position="196"/>
    </location>
</feature>
<feature type="region of interest" description="Disordered" evidence="4">
    <location>
        <begin position="252"/>
        <end position="271"/>
    </location>
</feature>
<feature type="active site" description="Nucleophile" evidence="2">
    <location>
        <position position="125"/>
    </location>
</feature>
<feature type="active site" evidence="2">
    <location>
        <position position="179"/>
    </location>
</feature>
<accession>Q6CR06</accession>
<organism>
    <name type="scientific">Kluyveromyces lactis (strain ATCC 8585 / CBS 2359 / DSM 70799 / NBRC 1267 / NRRL Y-1140 / WM37)</name>
    <name type="common">Yeast</name>
    <name type="synonym">Candida sphaerica</name>
    <dbReference type="NCBI Taxonomy" id="284590"/>
    <lineage>
        <taxon>Eukaryota</taxon>
        <taxon>Fungi</taxon>
        <taxon>Dikarya</taxon>
        <taxon>Ascomycota</taxon>
        <taxon>Saccharomycotina</taxon>
        <taxon>Saccharomycetes</taxon>
        <taxon>Saccharomycetales</taxon>
        <taxon>Saccharomycetaceae</taxon>
        <taxon>Kluyveromyces</taxon>
    </lineage>
</organism>
<evidence type="ECO:0000250" key="1"/>
<evidence type="ECO:0000250" key="2">
    <source>
        <dbReference type="UniProtKB" id="O74926"/>
    </source>
</evidence>
<evidence type="ECO:0000255" key="3"/>
<evidence type="ECO:0000256" key="4">
    <source>
        <dbReference type="SAM" id="MobiDB-lite"/>
    </source>
</evidence>
<evidence type="ECO:0000305" key="5"/>
<keyword id="KW-0333">Golgi apparatus</keyword>
<keyword id="KW-0378">Hydrolase</keyword>
<keyword id="KW-0472">Membrane</keyword>
<keyword id="KW-0645">Protease</keyword>
<keyword id="KW-1185">Reference proteome</keyword>
<keyword id="KW-0720">Serine protease</keyword>
<keyword id="KW-0812">Transmembrane</keyword>
<keyword id="KW-1133">Transmembrane helix</keyword>
<name>RBD2_KLULA</name>
<dbReference type="EC" id="3.4.21.105" evidence="2"/>
<dbReference type="EMBL" id="CR382124">
    <property type="protein sequence ID" value="CAH00729.1"/>
    <property type="molecule type" value="Genomic_DNA"/>
</dbReference>
<dbReference type="RefSeq" id="XP_453633.1">
    <property type="nucleotide sequence ID" value="XM_453633.1"/>
</dbReference>
<dbReference type="SMR" id="Q6CR06"/>
<dbReference type="FunCoup" id="Q6CR06">
    <property type="interactions" value="86"/>
</dbReference>
<dbReference type="STRING" id="284590.Q6CR06"/>
<dbReference type="PaxDb" id="284590-Q6CR06"/>
<dbReference type="KEGG" id="kla:KLLA0_D12804g"/>
<dbReference type="eggNOG" id="KOG2632">
    <property type="taxonomic scope" value="Eukaryota"/>
</dbReference>
<dbReference type="HOGENOM" id="CLU_071084_0_0_1"/>
<dbReference type="InParanoid" id="Q6CR06"/>
<dbReference type="OMA" id="NTYPIVH"/>
<dbReference type="Proteomes" id="UP000000598">
    <property type="component" value="Chromosome D"/>
</dbReference>
<dbReference type="GO" id="GO:0000139">
    <property type="term" value="C:Golgi membrane"/>
    <property type="evidence" value="ECO:0007669"/>
    <property type="project" value="UniProtKB-SubCell"/>
</dbReference>
<dbReference type="GO" id="GO:0004252">
    <property type="term" value="F:serine-type endopeptidase activity"/>
    <property type="evidence" value="ECO:0007669"/>
    <property type="project" value="InterPro"/>
</dbReference>
<dbReference type="GO" id="GO:0006508">
    <property type="term" value="P:proteolysis"/>
    <property type="evidence" value="ECO:0007669"/>
    <property type="project" value="UniProtKB-KW"/>
</dbReference>
<dbReference type="Gene3D" id="1.20.1540.10">
    <property type="entry name" value="Rhomboid-like"/>
    <property type="match status" value="1"/>
</dbReference>
<dbReference type="InterPro" id="IPR022764">
    <property type="entry name" value="Peptidase_S54_rhomboid_dom"/>
</dbReference>
<dbReference type="InterPro" id="IPR035952">
    <property type="entry name" value="Rhomboid-like_sf"/>
</dbReference>
<dbReference type="PANTHER" id="PTHR43066:SF1">
    <property type="entry name" value="RHOMBOID PROTEIN 2"/>
    <property type="match status" value="1"/>
</dbReference>
<dbReference type="PANTHER" id="PTHR43066">
    <property type="entry name" value="RHOMBOID-RELATED PROTEIN"/>
    <property type="match status" value="1"/>
</dbReference>
<dbReference type="Pfam" id="PF01694">
    <property type="entry name" value="Rhomboid"/>
    <property type="match status" value="1"/>
</dbReference>
<dbReference type="SUPFAM" id="SSF144091">
    <property type="entry name" value="Rhomboid-like"/>
    <property type="match status" value="1"/>
</dbReference>
<sequence length="271" mass="30208">MNIKQFFVPAGKPLSGLAVGLSIFLTALFLVNNLVYPINEHLLLKPDSLFKFDLNRISLYPLAHLSFFHLFFNVISTFSMIVMFEESHGTLYTGVILNLLAVFTAIPYCLIGSLLFPNVEIGGASGWFFSFLGYFAVKESRVRNSVMITSTFSFPTLYFPVALLFVTALLAPGSSLPGHAIGLLLGYFMGLKENWVAKITPPSFVLKKIETWVDPLINLIPFGIKYYREVEVDRSLEYTSVYLGSESRLPLHNTDTPAEPTFQGNGRVLGN</sequence>